<accession>B9DM37</accession>
<gene>
    <name evidence="1" type="primary">rplN</name>
    <name type="ordered locus">Sca_1725</name>
</gene>
<reference key="1">
    <citation type="journal article" date="2009" name="Appl. Environ. Microbiol.">
        <title>Genome analysis of the meat starter culture bacterium Staphylococcus carnosus TM300.</title>
        <authorList>
            <person name="Rosenstein R."/>
            <person name="Nerz C."/>
            <person name="Biswas L."/>
            <person name="Resch A."/>
            <person name="Raddatz G."/>
            <person name="Schuster S.C."/>
            <person name="Goetz F."/>
        </authorList>
    </citation>
    <scope>NUCLEOTIDE SEQUENCE [LARGE SCALE GENOMIC DNA]</scope>
    <source>
        <strain>TM300</strain>
    </source>
</reference>
<keyword id="KW-1185">Reference proteome</keyword>
<keyword id="KW-0687">Ribonucleoprotein</keyword>
<keyword id="KW-0689">Ribosomal protein</keyword>
<keyword id="KW-0694">RNA-binding</keyword>
<keyword id="KW-0699">rRNA-binding</keyword>
<dbReference type="EMBL" id="AM295250">
    <property type="protein sequence ID" value="CAL28631.1"/>
    <property type="molecule type" value="Genomic_DNA"/>
</dbReference>
<dbReference type="RefSeq" id="WP_015900969.1">
    <property type="nucleotide sequence ID" value="NC_012121.1"/>
</dbReference>
<dbReference type="SMR" id="B9DM37"/>
<dbReference type="GeneID" id="93794184"/>
<dbReference type="KEGG" id="sca:SCA_1725"/>
<dbReference type="eggNOG" id="COG0093">
    <property type="taxonomic scope" value="Bacteria"/>
</dbReference>
<dbReference type="HOGENOM" id="CLU_095071_2_1_9"/>
<dbReference type="OrthoDB" id="9806379at2"/>
<dbReference type="BioCyc" id="SCAR396513:SCA_RS08790-MONOMER"/>
<dbReference type="Proteomes" id="UP000000444">
    <property type="component" value="Chromosome"/>
</dbReference>
<dbReference type="GO" id="GO:0022625">
    <property type="term" value="C:cytosolic large ribosomal subunit"/>
    <property type="evidence" value="ECO:0007669"/>
    <property type="project" value="TreeGrafter"/>
</dbReference>
<dbReference type="GO" id="GO:0070180">
    <property type="term" value="F:large ribosomal subunit rRNA binding"/>
    <property type="evidence" value="ECO:0007669"/>
    <property type="project" value="TreeGrafter"/>
</dbReference>
<dbReference type="GO" id="GO:0003735">
    <property type="term" value="F:structural constituent of ribosome"/>
    <property type="evidence" value="ECO:0007669"/>
    <property type="project" value="InterPro"/>
</dbReference>
<dbReference type="GO" id="GO:0006412">
    <property type="term" value="P:translation"/>
    <property type="evidence" value="ECO:0007669"/>
    <property type="project" value="UniProtKB-UniRule"/>
</dbReference>
<dbReference type="CDD" id="cd00337">
    <property type="entry name" value="Ribosomal_uL14"/>
    <property type="match status" value="1"/>
</dbReference>
<dbReference type="FunFam" id="2.40.150.20:FF:000001">
    <property type="entry name" value="50S ribosomal protein L14"/>
    <property type="match status" value="1"/>
</dbReference>
<dbReference type="Gene3D" id="2.40.150.20">
    <property type="entry name" value="Ribosomal protein L14"/>
    <property type="match status" value="1"/>
</dbReference>
<dbReference type="HAMAP" id="MF_01367">
    <property type="entry name" value="Ribosomal_uL14"/>
    <property type="match status" value="1"/>
</dbReference>
<dbReference type="InterPro" id="IPR000218">
    <property type="entry name" value="Ribosomal_uL14"/>
</dbReference>
<dbReference type="InterPro" id="IPR005745">
    <property type="entry name" value="Ribosomal_uL14_bac-type"/>
</dbReference>
<dbReference type="InterPro" id="IPR019972">
    <property type="entry name" value="Ribosomal_uL14_CS"/>
</dbReference>
<dbReference type="InterPro" id="IPR036853">
    <property type="entry name" value="Ribosomal_uL14_sf"/>
</dbReference>
<dbReference type="NCBIfam" id="TIGR01067">
    <property type="entry name" value="rplN_bact"/>
    <property type="match status" value="1"/>
</dbReference>
<dbReference type="PANTHER" id="PTHR11761">
    <property type="entry name" value="50S/60S RIBOSOMAL PROTEIN L14/L23"/>
    <property type="match status" value="1"/>
</dbReference>
<dbReference type="PANTHER" id="PTHR11761:SF3">
    <property type="entry name" value="LARGE RIBOSOMAL SUBUNIT PROTEIN UL14M"/>
    <property type="match status" value="1"/>
</dbReference>
<dbReference type="Pfam" id="PF00238">
    <property type="entry name" value="Ribosomal_L14"/>
    <property type="match status" value="1"/>
</dbReference>
<dbReference type="SMART" id="SM01374">
    <property type="entry name" value="Ribosomal_L14"/>
    <property type="match status" value="1"/>
</dbReference>
<dbReference type="SUPFAM" id="SSF50193">
    <property type="entry name" value="Ribosomal protein L14"/>
    <property type="match status" value="1"/>
</dbReference>
<dbReference type="PROSITE" id="PS00049">
    <property type="entry name" value="RIBOSOMAL_L14"/>
    <property type="match status" value="1"/>
</dbReference>
<sequence>MIQQETRLKVADNSGAREVLTIKVLGGSGRKTANIGDVIVCTVKNATPGGVVKKGEVVKAVVVRTKSGVRRKDGSYIKFDENACVVIRDDKSPRGTRIFGPVARELRDNNYMKIISLAPEVL</sequence>
<protein>
    <recommendedName>
        <fullName evidence="1">Large ribosomal subunit protein uL14</fullName>
    </recommendedName>
    <alternativeName>
        <fullName evidence="2">50S ribosomal protein L14</fullName>
    </alternativeName>
</protein>
<evidence type="ECO:0000255" key="1">
    <source>
        <dbReference type="HAMAP-Rule" id="MF_01367"/>
    </source>
</evidence>
<evidence type="ECO:0000305" key="2"/>
<name>RL14_STACT</name>
<proteinExistence type="inferred from homology"/>
<organism>
    <name type="scientific">Staphylococcus carnosus (strain TM300)</name>
    <dbReference type="NCBI Taxonomy" id="396513"/>
    <lineage>
        <taxon>Bacteria</taxon>
        <taxon>Bacillati</taxon>
        <taxon>Bacillota</taxon>
        <taxon>Bacilli</taxon>
        <taxon>Bacillales</taxon>
        <taxon>Staphylococcaceae</taxon>
        <taxon>Staphylococcus</taxon>
    </lineage>
</organism>
<comment type="function">
    <text evidence="1">Binds to 23S rRNA. Forms part of two intersubunit bridges in the 70S ribosome.</text>
</comment>
<comment type="subunit">
    <text evidence="1">Part of the 50S ribosomal subunit. Forms a cluster with proteins L3 and L19. In the 70S ribosome, L14 and L19 interact and together make contacts with the 16S rRNA in bridges B5 and B8.</text>
</comment>
<comment type="similarity">
    <text evidence="1">Belongs to the universal ribosomal protein uL14 family.</text>
</comment>
<feature type="chain" id="PRO_1000166937" description="Large ribosomal subunit protein uL14">
    <location>
        <begin position="1"/>
        <end position="122"/>
    </location>
</feature>